<dbReference type="EMBL" id="AF020291">
    <property type="protein sequence ID" value="AAC39516.1"/>
    <property type="molecule type" value="mRNA"/>
</dbReference>
<dbReference type="SMR" id="O46378"/>
<dbReference type="STRING" id="9986.ENSOCUP00000007954"/>
<dbReference type="GlyCosmos" id="O46378">
    <property type="glycosylation" value="3 sites, No reported glycans"/>
</dbReference>
<dbReference type="PaxDb" id="9986-ENSOCUP00000007954"/>
<dbReference type="eggNOG" id="KOG0619">
    <property type="taxonomic scope" value="Eukaryota"/>
</dbReference>
<dbReference type="InParanoid" id="O46378"/>
<dbReference type="Proteomes" id="UP000001811">
    <property type="component" value="Unplaced"/>
</dbReference>
<dbReference type="GO" id="GO:0005615">
    <property type="term" value="C:extracellular space"/>
    <property type="evidence" value="ECO:0007669"/>
    <property type="project" value="TreeGrafter"/>
</dbReference>
<dbReference type="FunFam" id="3.80.10.10:FF:000217">
    <property type="entry name" value="fibromodulin"/>
    <property type="match status" value="1"/>
</dbReference>
<dbReference type="Gene3D" id="3.80.10.10">
    <property type="entry name" value="Ribonuclease Inhibitor"/>
    <property type="match status" value="2"/>
</dbReference>
<dbReference type="InterPro" id="IPR001611">
    <property type="entry name" value="Leu-rich_rpt"/>
</dbReference>
<dbReference type="InterPro" id="IPR003591">
    <property type="entry name" value="Leu-rich_rpt_typical-subtyp"/>
</dbReference>
<dbReference type="InterPro" id="IPR032675">
    <property type="entry name" value="LRR_dom_sf"/>
</dbReference>
<dbReference type="InterPro" id="IPR050333">
    <property type="entry name" value="SLRP"/>
</dbReference>
<dbReference type="PANTHER" id="PTHR45712">
    <property type="entry name" value="AGAP008170-PA"/>
    <property type="match status" value="1"/>
</dbReference>
<dbReference type="PANTHER" id="PTHR45712:SF4">
    <property type="entry name" value="FIBROMODULIN"/>
    <property type="match status" value="1"/>
</dbReference>
<dbReference type="Pfam" id="PF13855">
    <property type="entry name" value="LRR_8"/>
    <property type="match status" value="2"/>
</dbReference>
<dbReference type="SMART" id="SM00364">
    <property type="entry name" value="LRR_BAC"/>
    <property type="match status" value="3"/>
</dbReference>
<dbReference type="SMART" id="SM00369">
    <property type="entry name" value="LRR_TYP"/>
    <property type="match status" value="4"/>
</dbReference>
<dbReference type="SUPFAM" id="SSF52058">
    <property type="entry name" value="L domain-like"/>
    <property type="match status" value="1"/>
</dbReference>
<dbReference type="PROSITE" id="PS51450">
    <property type="entry name" value="LRR"/>
    <property type="match status" value="6"/>
</dbReference>
<comment type="function">
    <text evidence="1">Affects the rate of fibrils formation. May have a primary role in collagen fibrillogenesis (By similarity).</text>
</comment>
<comment type="subunit">
    <text evidence="1">Binds to type I and type II collagen.</text>
</comment>
<comment type="subcellular location">
    <subcellularLocation>
        <location>Secreted</location>
        <location>Extracellular space</location>
        <location>Extracellular matrix</location>
    </subcellularLocation>
</comment>
<comment type="PTM">
    <text evidence="1">Binds keratan sulfate chains.</text>
</comment>
<comment type="PTM">
    <text evidence="1">Sulfated on tyrosine residues.</text>
</comment>
<comment type="PTM">
    <text evidence="1">The N-terminus is blocked by a pyrrolidone carboxylic acid generated by post-translational modification of N-terminal glutamine.</text>
</comment>
<comment type="similarity">
    <text evidence="3">Belongs to the small leucine-rich proteoglycan (SLRP) family. SLRP class II subfamily.</text>
</comment>
<sequence>LDHNNLTRMPGPLPRSLRELHLDHNQISRVPNNALEGLENLTALYLQHNEIQEVGSSMRGLRSLILLDLSYNHLRRVPDGLPSALEQLYLEHNNVYTVPDSYFRGSPKLLYVRLSHNSLTNSGLASNTFNSSSLLELDLSYNQLQKI</sequence>
<feature type="chain" id="PRO_0000180086" description="Fibromodulin">
    <location>
        <begin position="1" status="less than"/>
        <end position="147" status="greater than"/>
    </location>
</feature>
<feature type="repeat" description="LRR 1">
    <location>
        <begin position="1" status="less than"/>
        <end position="15"/>
    </location>
</feature>
<feature type="repeat" description="LRR 2">
    <location>
        <begin position="16"/>
        <end position="37"/>
    </location>
</feature>
<feature type="repeat" description="LRR 3">
    <location>
        <begin position="40"/>
        <end position="61"/>
    </location>
</feature>
<feature type="repeat" description="LRR 4">
    <location>
        <begin position="63"/>
        <end position="84"/>
    </location>
</feature>
<feature type="repeat" description="LRR 5">
    <location>
        <begin position="85"/>
        <end position="105"/>
    </location>
</feature>
<feature type="repeat" description="LRR 6">
    <location>
        <begin position="108"/>
        <end position="128"/>
    </location>
</feature>
<feature type="repeat" description="LRR 7">
    <location>
        <begin position="133"/>
        <end position="147" status="greater than"/>
    </location>
</feature>
<feature type="glycosylation site" description="N-linked (GlcNAc...) asparagine" evidence="2">
    <location>
        <position position="5"/>
    </location>
</feature>
<feature type="glycosylation site" description="N-linked (GlcNAc...) asparagine" evidence="2">
    <location>
        <position position="40"/>
    </location>
</feature>
<feature type="glycosylation site" description="N-linked (GlcNAc...) asparagine" evidence="2">
    <location>
        <position position="130"/>
    </location>
</feature>
<feature type="non-terminal residue">
    <location>
        <position position="1"/>
    </location>
</feature>
<feature type="non-terminal residue">
    <location>
        <position position="147"/>
    </location>
</feature>
<reference key="1">
    <citation type="journal article" date="1998" name="Matrix Biol.">
        <title>Altered levels of extracellular matrix molecules mRNA in healing rabbit ligaments.</title>
        <authorList>
            <person name="Boykiw R.H."/>
            <person name="Sciore P."/>
            <person name="Reno C.R."/>
            <person name="Marchuk L."/>
            <person name="Frank C."/>
            <person name="Hart D.A."/>
        </authorList>
    </citation>
    <scope>NUCLEOTIDE SEQUENCE [MRNA]</scope>
    <source>
        <strain>New Zealand white</strain>
    </source>
</reference>
<proteinExistence type="evidence at transcript level"/>
<keyword id="KW-0272">Extracellular matrix</keyword>
<keyword id="KW-0325">Glycoprotein</keyword>
<keyword id="KW-0433">Leucine-rich repeat</keyword>
<keyword id="KW-0654">Proteoglycan</keyword>
<keyword id="KW-0873">Pyrrolidone carboxylic acid</keyword>
<keyword id="KW-1185">Reference proteome</keyword>
<keyword id="KW-0677">Repeat</keyword>
<keyword id="KW-0964">Secreted</keyword>
<keyword id="KW-0765">Sulfation</keyword>
<gene>
    <name type="primary">FMOD</name>
</gene>
<name>FMOD_RABIT</name>
<accession>O46378</accession>
<protein>
    <recommendedName>
        <fullName>Fibromodulin</fullName>
        <shortName>FM</shortName>
    </recommendedName>
    <alternativeName>
        <fullName>Collagen-binding 59 kDa protein</fullName>
    </alternativeName>
    <alternativeName>
        <fullName>Keratan sulfate proteoglycan fibromodulin</fullName>
        <shortName>KSPG fibromodulin</shortName>
    </alternativeName>
</protein>
<evidence type="ECO:0000250" key="1"/>
<evidence type="ECO:0000255" key="2"/>
<evidence type="ECO:0000305" key="3"/>
<organism>
    <name type="scientific">Oryctolagus cuniculus</name>
    <name type="common">Rabbit</name>
    <dbReference type="NCBI Taxonomy" id="9986"/>
    <lineage>
        <taxon>Eukaryota</taxon>
        <taxon>Metazoa</taxon>
        <taxon>Chordata</taxon>
        <taxon>Craniata</taxon>
        <taxon>Vertebrata</taxon>
        <taxon>Euteleostomi</taxon>
        <taxon>Mammalia</taxon>
        <taxon>Eutheria</taxon>
        <taxon>Euarchontoglires</taxon>
        <taxon>Glires</taxon>
        <taxon>Lagomorpha</taxon>
        <taxon>Leporidae</taxon>
        <taxon>Oryctolagus</taxon>
    </lineage>
</organism>